<protein>
    <recommendedName>
        <fullName>Spliceosome RNA helicase DDX39B</fullName>
        <ecNumber>3.6.4.13</ecNumber>
    </recommendedName>
    <alternativeName>
        <fullName>56 kDa U2AF65-associated protein</fullName>
    </alternativeName>
    <alternativeName>
        <fullName>DEAD box protein UAP56</fullName>
    </alternativeName>
</protein>
<feature type="chain" id="PRO_0000055078" description="Spliceosome RNA helicase DDX39B">
    <location>
        <begin position="1"/>
        <end position="428"/>
    </location>
</feature>
<feature type="domain" description="Helicase ATP-binding" evidence="3">
    <location>
        <begin position="76"/>
        <end position="249"/>
    </location>
</feature>
<feature type="domain" description="Helicase C-terminal" evidence="4">
    <location>
        <begin position="261"/>
        <end position="422"/>
    </location>
</feature>
<feature type="region of interest" description="Disordered" evidence="5">
    <location>
        <begin position="1"/>
        <end position="35"/>
    </location>
</feature>
<feature type="short sequence motif" description="Q motif">
    <location>
        <begin position="45"/>
        <end position="73"/>
    </location>
</feature>
<feature type="short sequence motif" description="DECD box">
    <location>
        <begin position="196"/>
        <end position="199"/>
    </location>
</feature>
<feature type="compositionally biased region" description="Acidic residues" evidence="5">
    <location>
        <begin position="1"/>
        <end position="19"/>
    </location>
</feature>
<feature type="binding site" evidence="3">
    <location>
        <begin position="89"/>
        <end position="96"/>
    </location>
    <ligand>
        <name>ATP</name>
        <dbReference type="ChEBI" id="CHEBI:30616"/>
    </ligand>
</feature>
<reference key="1">
    <citation type="journal article" date="2005" name="Genome Biol.">
        <title>Full-length cDNAs from chicken bursal lymphocytes to facilitate gene function analysis.</title>
        <authorList>
            <person name="Caldwell R.B."/>
            <person name="Kierzek A.M."/>
            <person name="Arakawa H."/>
            <person name="Bezzubov Y."/>
            <person name="Zaim J."/>
            <person name="Fiedler P."/>
            <person name="Kutter S."/>
            <person name="Blagodatski A."/>
            <person name="Kostovska D."/>
            <person name="Koter M."/>
            <person name="Plachy J."/>
            <person name="Carninci P."/>
            <person name="Hayashizaki Y."/>
            <person name="Buerstedde J.-M."/>
        </authorList>
    </citation>
    <scope>NUCLEOTIDE SEQUENCE [LARGE SCALE MRNA]</scope>
    <source>
        <strain>CB</strain>
        <tissue>Bursa of Fabricius</tissue>
    </source>
</reference>
<comment type="function">
    <text evidence="2">Involved in nuclear export of spliced and unspliced mRNA. Component of the TREX complex which is thought to couple mRNA transcription, processing and nuclear export, and specifically associates with spliced mRNA and not with unspliced pre-mRNA. The TREX complex is recruited to spliced mRNAs by a transcription-independent mechanism, binds to mRNA upstream of the exon-junction complex (EJC) and is recruited in a splicing- and cap-dependent manner to a region near the 5' end of the mRNA where it functions in mRNA export to the cytoplasm via the TAP/NXF1 pathway. Involved in transcription elongation and genome stability.</text>
</comment>
<comment type="function">
    <text evidence="1">Splice factor that is required for the first ATP-dependent step in spliceosome assembly and for the interaction of U2 snRNP with the branchpoint. Has both RNA-stimulated ATP binding/hydrolysis activity and ATP-dependent RNA unwinding activity. Even with the stimulation of RNA, the ATPase activity is weak. Can only hydrolyze ATP but not other NTPs. The RNA stimulation of ATPase activity does not have a strong preference for the sequence and length of the RNA. However, ssRNA stimulates the ATPase activity much more strongly than dsRNA. Can unwind 5' or 3' overhangs or blunt end RNA duplexes in vitro. The ATPase and helicase activities are not influenced by U2AF2; the effect of ALYREF/THOC4 is reported conflictingly (By similarity).</text>
</comment>
<comment type="catalytic activity">
    <reaction>
        <text>ATP + H2O = ADP + phosphate + H(+)</text>
        <dbReference type="Rhea" id="RHEA:13065"/>
        <dbReference type="ChEBI" id="CHEBI:15377"/>
        <dbReference type="ChEBI" id="CHEBI:15378"/>
        <dbReference type="ChEBI" id="CHEBI:30616"/>
        <dbReference type="ChEBI" id="CHEBI:43474"/>
        <dbReference type="ChEBI" id="CHEBI:456216"/>
        <dbReference type="EC" id="3.6.4.13"/>
    </reaction>
</comment>
<comment type="subunit">
    <text evidence="2">Component of the transcription/export (TREX) complex at least composed of ALYREF/THOC4, DDX39B, SARNP/CIP29, CHTOP and the THO subcomplex.</text>
</comment>
<comment type="subcellular location">
    <subcellularLocation>
        <location evidence="1">Nucleus</location>
    </subcellularLocation>
    <subcellularLocation>
        <location evidence="1">Nucleus speckle</location>
    </subcellularLocation>
</comment>
<comment type="domain">
    <text evidence="1">The helicase C-terminal domain mediates interaction with ALYREF/THOC4.</text>
</comment>
<comment type="similarity">
    <text evidence="6">Belongs to the DEAD box helicase family. DECD subfamily.</text>
</comment>
<organism>
    <name type="scientific">Gallus gallus</name>
    <name type="common">Chicken</name>
    <dbReference type="NCBI Taxonomy" id="9031"/>
    <lineage>
        <taxon>Eukaryota</taxon>
        <taxon>Metazoa</taxon>
        <taxon>Chordata</taxon>
        <taxon>Craniata</taxon>
        <taxon>Vertebrata</taxon>
        <taxon>Euteleostomi</taxon>
        <taxon>Archelosauria</taxon>
        <taxon>Archosauria</taxon>
        <taxon>Dinosauria</taxon>
        <taxon>Saurischia</taxon>
        <taxon>Theropoda</taxon>
        <taxon>Coelurosauria</taxon>
        <taxon>Aves</taxon>
        <taxon>Neognathae</taxon>
        <taxon>Galloanserae</taxon>
        <taxon>Galliformes</taxon>
        <taxon>Phasianidae</taxon>
        <taxon>Phasianinae</taxon>
        <taxon>Gallus</taxon>
    </lineage>
</organism>
<sequence>MAENDVDNELLDYEEDEVENAAGGDGSEAPPKKDVKGSYVSIHSSGFRDFLLKPELLRAIVDCGFEHPSEVQHECIPQAILGMDVLCQAKSGMGKTAVFVLATLQQLEPVTGQVSVLVMCHTRELAFQISKEYERFSKYMPSVKVAVFFGGLAVKKDEEVLKKNCPHIVVGTPGRILALARNKSLNLKHIKHFILDECDKMLEQLDMRRDVQEIFRMTPHEKQVMMFSATLSKEIRPVCRKFMQDPMEIFVDDETKLTLHGLQQYYVKLKDNEKNRKLFDLLDVLEFNQVVIFVKSVQRCIALAQLLVEQNFPAIAIHRGMPQEERLSRYQQFKDFQRRILVATNLFGRGMDIERVNIAFNYDMPEDSDTYLHRVARAGRFGTKGLAITFVSDENDAKILNDVQDRFEVNISELPDEIDISSYIEQTR</sequence>
<name>DX39B_CHICK</name>
<gene>
    <name type="primary">DDX39B</name>
    <name type="synonym">BAT1</name>
    <name type="synonym">UAP56</name>
    <name type="ORF">RCJMB04_32b9</name>
</gene>
<accession>Q5ZHZ0</accession>
<keyword id="KW-0067">ATP-binding</keyword>
<keyword id="KW-0347">Helicase</keyword>
<keyword id="KW-0378">Hydrolase</keyword>
<keyword id="KW-0507">mRNA processing</keyword>
<keyword id="KW-0508">mRNA splicing</keyword>
<keyword id="KW-0509">mRNA transport</keyword>
<keyword id="KW-0547">Nucleotide-binding</keyword>
<keyword id="KW-0539">Nucleus</keyword>
<keyword id="KW-1185">Reference proteome</keyword>
<keyword id="KW-0694">RNA-binding</keyword>
<keyword id="KW-0747">Spliceosome</keyword>
<keyword id="KW-0813">Transport</keyword>
<evidence type="ECO:0000250" key="1"/>
<evidence type="ECO:0000250" key="2">
    <source>
        <dbReference type="UniProtKB" id="Q13838"/>
    </source>
</evidence>
<evidence type="ECO:0000255" key="3">
    <source>
        <dbReference type="PROSITE-ProRule" id="PRU00541"/>
    </source>
</evidence>
<evidence type="ECO:0000255" key="4">
    <source>
        <dbReference type="PROSITE-ProRule" id="PRU00542"/>
    </source>
</evidence>
<evidence type="ECO:0000256" key="5">
    <source>
        <dbReference type="SAM" id="MobiDB-lite"/>
    </source>
</evidence>
<evidence type="ECO:0000305" key="6"/>
<proteinExistence type="evidence at transcript level"/>
<dbReference type="EC" id="3.6.4.13"/>
<dbReference type="EMBL" id="AJ720994">
    <property type="protein sequence ID" value="CAG32653.1"/>
    <property type="molecule type" value="mRNA"/>
</dbReference>
<dbReference type="SMR" id="Q5ZHZ0"/>
<dbReference type="FunCoup" id="Q5ZHZ0">
    <property type="interactions" value="3458"/>
</dbReference>
<dbReference type="VEuPathDB" id="HostDB:geneid_416704"/>
<dbReference type="InParanoid" id="Q5ZHZ0"/>
<dbReference type="PhylomeDB" id="Q5ZHZ0"/>
<dbReference type="Proteomes" id="UP000000539">
    <property type="component" value="Unassembled WGS sequence"/>
</dbReference>
<dbReference type="GO" id="GO:0016607">
    <property type="term" value="C:nuclear speck"/>
    <property type="evidence" value="ECO:0007669"/>
    <property type="project" value="UniProtKB-SubCell"/>
</dbReference>
<dbReference type="GO" id="GO:0005681">
    <property type="term" value="C:spliceosomal complex"/>
    <property type="evidence" value="ECO:0007669"/>
    <property type="project" value="UniProtKB-KW"/>
</dbReference>
<dbReference type="GO" id="GO:0005524">
    <property type="term" value="F:ATP binding"/>
    <property type="evidence" value="ECO:0007669"/>
    <property type="project" value="UniProtKB-KW"/>
</dbReference>
<dbReference type="GO" id="GO:0016887">
    <property type="term" value="F:ATP hydrolysis activity"/>
    <property type="evidence" value="ECO:0007669"/>
    <property type="project" value="RHEA"/>
</dbReference>
<dbReference type="GO" id="GO:0003729">
    <property type="term" value="F:mRNA binding"/>
    <property type="evidence" value="ECO:0000318"/>
    <property type="project" value="GO_Central"/>
</dbReference>
<dbReference type="GO" id="GO:0003724">
    <property type="term" value="F:RNA helicase activity"/>
    <property type="evidence" value="ECO:0000318"/>
    <property type="project" value="GO_Central"/>
</dbReference>
<dbReference type="GO" id="GO:0006406">
    <property type="term" value="P:mRNA export from nucleus"/>
    <property type="evidence" value="ECO:0000318"/>
    <property type="project" value="GO_Central"/>
</dbReference>
<dbReference type="GO" id="GO:0000398">
    <property type="term" value="P:mRNA splicing, via spliceosome"/>
    <property type="evidence" value="ECO:0000318"/>
    <property type="project" value="GO_Central"/>
</dbReference>
<dbReference type="CDD" id="cd17950">
    <property type="entry name" value="DEADc_DDX39"/>
    <property type="match status" value="1"/>
</dbReference>
<dbReference type="CDD" id="cd18787">
    <property type="entry name" value="SF2_C_DEAD"/>
    <property type="match status" value="1"/>
</dbReference>
<dbReference type="FunFam" id="3.40.50.300:FF:000111">
    <property type="entry name" value="DEAD-box ATP-dependent RNA helicase"/>
    <property type="match status" value="1"/>
</dbReference>
<dbReference type="FunFam" id="3.40.50.300:FF:000168">
    <property type="entry name" value="DEAD-box ATP-dependent RNA helicase 56-like"/>
    <property type="match status" value="1"/>
</dbReference>
<dbReference type="Gene3D" id="3.40.50.300">
    <property type="entry name" value="P-loop containing nucleotide triphosphate hydrolases"/>
    <property type="match status" value="2"/>
</dbReference>
<dbReference type="InterPro" id="IPR011545">
    <property type="entry name" value="DEAD/DEAH_box_helicase_dom"/>
</dbReference>
<dbReference type="InterPro" id="IPR014001">
    <property type="entry name" value="Helicase_ATP-bd"/>
</dbReference>
<dbReference type="InterPro" id="IPR001650">
    <property type="entry name" value="Helicase_C-like"/>
</dbReference>
<dbReference type="InterPro" id="IPR027417">
    <property type="entry name" value="P-loop_NTPase"/>
</dbReference>
<dbReference type="InterPro" id="IPR014014">
    <property type="entry name" value="RNA_helicase_DEAD_Q_motif"/>
</dbReference>
<dbReference type="PANTHER" id="PTHR47958">
    <property type="entry name" value="ATP-DEPENDENT RNA HELICASE DBP3"/>
    <property type="match status" value="1"/>
</dbReference>
<dbReference type="Pfam" id="PF00270">
    <property type="entry name" value="DEAD"/>
    <property type="match status" value="1"/>
</dbReference>
<dbReference type="Pfam" id="PF00271">
    <property type="entry name" value="Helicase_C"/>
    <property type="match status" value="1"/>
</dbReference>
<dbReference type="SMART" id="SM00487">
    <property type="entry name" value="DEXDc"/>
    <property type="match status" value="1"/>
</dbReference>
<dbReference type="SMART" id="SM00490">
    <property type="entry name" value="HELICc"/>
    <property type="match status" value="1"/>
</dbReference>
<dbReference type="SUPFAM" id="SSF52540">
    <property type="entry name" value="P-loop containing nucleoside triphosphate hydrolases"/>
    <property type="match status" value="1"/>
</dbReference>
<dbReference type="PROSITE" id="PS51192">
    <property type="entry name" value="HELICASE_ATP_BIND_1"/>
    <property type="match status" value="1"/>
</dbReference>
<dbReference type="PROSITE" id="PS51194">
    <property type="entry name" value="HELICASE_CTER"/>
    <property type="match status" value="1"/>
</dbReference>
<dbReference type="PROSITE" id="PS51195">
    <property type="entry name" value="Q_MOTIF"/>
    <property type="match status" value="1"/>
</dbReference>